<dbReference type="EC" id="6.3.4.3" evidence="1"/>
<dbReference type="EMBL" id="CP000686">
    <property type="protein sequence ID" value="ABQ88655.1"/>
    <property type="molecule type" value="Genomic_DNA"/>
</dbReference>
<dbReference type="RefSeq" id="WP_011955014.1">
    <property type="nucleotide sequence ID" value="NC_009523.1"/>
</dbReference>
<dbReference type="SMR" id="A5UPV2"/>
<dbReference type="STRING" id="357808.RoseRS_0219"/>
<dbReference type="KEGG" id="rrs:RoseRS_0219"/>
<dbReference type="eggNOG" id="COG2759">
    <property type="taxonomic scope" value="Bacteria"/>
</dbReference>
<dbReference type="HOGENOM" id="CLU_003601_3_3_0"/>
<dbReference type="OrthoDB" id="9761733at2"/>
<dbReference type="UniPathway" id="UPA00193"/>
<dbReference type="Proteomes" id="UP000006554">
    <property type="component" value="Chromosome"/>
</dbReference>
<dbReference type="GO" id="GO:0005524">
    <property type="term" value="F:ATP binding"/>
    <property type="evidence" value="ECO:0007669"/>
    <property type="project" value="UniProtKB-UniRule"/>
</dbReference>
<dbReference type="GO" id="GO:0004329">
    <property type="term" value="F:formate-tetrahydrofolate ligase activity"/>
    <property type="evidence" value="ECO:0007669"/>
    <property type="project" value="UniProtKB-UniRule"/>
</dbReference>
<dbReference type="GO" id="GO:0035999">
    <property type="term" value="P:tetrahydrofolate interconversion"/>
    <property type="evidence" value="ECO:0007669"/>
    <property type="project" value="UniProtKB-UniRule"/>
</dbReference>
<dbReference type="CDD" id="cd00477">
    <property type="entry name" value="FTHFS"/>
    <property type="match status" value="1"/>
</dbReference>
<dbReference type="FunFam" id="3.30.1510.10:FF:000001">
    <property type="entry name" value="Formate--tetrahydrofolate ligase"/>
    <property type="match status" value="1"/>
</dbReference>
<dbReference type="FunFam" id="3.10.410.10:FF:000001">
    <property type="entry name" value="Putative formate--tetrahydrofolate ligase"/>
    <property type="match status" value="1"/>
</dbReference>
<dbReference type="Gene3D" id="3.30.1510.10">
    <property type="entry name" value="Domain 2, N(10)-formyltetrahydrofolate synthetase"/>
    <property type="match status" value="1"/>
</dbReference>
<dbReference type="Gene3D" id="3.10.410.10">
    <property type="entry name" value="Formyltetrahydrofolate synthetase, domain 3"/>
    <property type="match status" value="1"/>
</dbReference>
<dbReference type="Gene3D" id="3.40.50.300">
    <property type="entry name" value="P-loop containing nucleotide triphosphate hydrolases"/>
    <property type="match status" value="1"/>
</dbReference>
<dbReference type="HAMAP" id="MF_01543">
    <property type="entry name" value="FTHFS"/>
    <property type="match status" value="1"/>
</dbReference>
<dbReference type="InterPro" id="IPR000559">
    <property type="entry name" value="Formate_THF_ligase"/>
</dbReference>
<dbReference type="InterPro" id="IPR020628">
    <property type="entry name" value="Formate_THF_ligase_CS"/>
</dbReference>
<dbReference type="InterPro" id="IPR027417">
    <property type="entry name" value="P-loop_NTPase"/>
</dbReference>
<dbReference type="NCBIfam" id="NF010030">
    <property type="entry name" value="PRK13505.1"/>
    <property type="match status" value="1"/>
</dbReference>
<dbReference type="Pfam" id="PF01268">
    <property type="entry name" value="FTHFS"/>
    <property type="match status" value="1"/>
</dbReference>
<dbReference type="SUPFAM" id="SSF52540">
    <property type="entry name" value="P-loop containing nucleoside triphosphate hydrolases"/>
    <property type="match status" value="1"/>
</dbReference>
<dbReference type="PROSITE" id="PS00721">
    <property type="entry name" value="FTHFS_1"/>
    <property type="match status" value="1"/>
</dbReference>
<dbReference type="PROSITE" id="PS00722">
    <property type="entry name" value="FTHFS_2"/>
    <property type="match status" value="1"/>
</dbReference>
<accession>A5UPV2</accession>
<evidence type="ECO:0000255" key="1">
    <source>
        <dbReference type="HAMAP-Rule" id="MF_01543"/>
    </source>
</evidence>
<organism>
    <name type="scientific">Roseiflexus sp. (strain RS-1)</name>
    <dbReference type="NCBI Taxonomy" id="357808"/>
    <lineage>
        <taxon>Bacteria</taxon>
        <taxon>Bacillati</taxon>
        <taxon>Chloroflexota</taxon>
        <taxon>Chloroflexia</taxon>
        <taxon>Chloroflexales</taxon>
        <taxon>Roseiflexineae</taxon>
        <taxon>Roseiflexaceae</taxon>
        <taxon>Roseiflexus</taxon>
    </lineage>
</organism>
<proteinExistence type="inferred from homology"/>
<sequence length="564" mass="59835">MLSDLDIAQAARLRPIHAVAADLGLTDDDIERYGRNIAKIDLAVLQRLTDHPRGRYIVVTAITPTPLGEGKTTTTIGLGQALARLGKRSVVTIRQPSMGPTFGIKGGAAGGGYSQVVPMEPFNLHLTGDIHAVGAAHNLLAAMIDNHLHHGNRLDIDPYTVSWTRVVDISDRALRQVIVGLGGKENGPVRQAQFDITVASEVMAILALTTGLHDLRQRLGRIVVAQTRDGAPVTADDLKAAGAMTVLLKEAIKPNLLQTLEGSPALVHCGPFANIAHGASSVLADLIGLHCADYVVTESGFGADIGFEKFCDIKCRASGLAPDAVVLVATVRALKAHSGRYAITAGKPLDPQLSEENPDDVAAGVANLTAQVRIAKLFGRPVVVAINRFPDDFPSEIEVVRQVARDAGAFEVVESFVFAEGGAGGYDLAQAVMAACEMPGKFTPLYPLDMSLRDKIETLATKVYGAARVEYTPEASRQLTRFEQQGYGALPICMAKTQLSISHDPKLRGAPSGYVFPIREVRLAAGAGFIYPLAGDIRTMPGLPAHPAAERIDIDADGRTVGLS</sequence>
<name>FTHS_ROSS1</name>
<comment type="catalytic activity">
    <reaction evidence="1">
        <text>(6S)-5,6,7,8-tetrahydrofolate + formate + ATP = (6R)-10-formyltetrahydrofolate + ADP + phosphate</text>
        <dbReference type="Rhea" id="RHEA:20221"/>
        <dbReference type="ChEBI" id="CHEBI:15740"/>
        <dbReference type="ChEBI" id="CHEBI:30616"/>
        <dbReference type="ChEBI" id="CHEBI:43474"/>
        <dbReference type="ChEBI" id="CHEBI:57453"/>
        <dbReference type="ChEBI" id="CHEBI:195366"/>
        <dbReference type="ChEBI" id="CHEBI:456216"/>
        <dbReference type="EC" id="6.3.4.3"/>
    </reaction>
</comment>
<comment type="pathway">
    <text evidence="1">One-carbon metabolism; tetrahydrofolate interconversion.</text>
</comment>
<comment type="similarity">
    <text evidence="1">Belongs to the formate--tetrahydrofolate ligase family.</text>
</comment>
<gene>
    <name evidence="1" type="primary">fhs</name>
    <name type="ordered locus">RoseRS_0219</name>
</gene>
<keyword id="KW-0067">ATP-binding</keyword>
<keyword id="KW-0436">Ligase</keyword>
<keyword id="KW-0547">Nucleotide-binding</keyword>
<keyword id="KW-0554">One-carbon metabolism</keyword>
<protein>
    <recommendedName>
        <fullName evidence="1">Formate--tetrahydrofolate ligase</fullName>
        <ecNumber evidence="1">6.3.4.3</ecNumber>
    </recommendedName>
    <alternativeName>
        <fullName evidence="1">Formyltetrahydrofolate synthetase</fullName>
        <shortName evidence="1">FHS</shortName>
        <shortName evidence="1">FTHFS</shortName>
    </alternativeName>
</protein>
<feature type="chain" id="PRO_1000068792" description="Formate--tetrahydrofolate ligase">
    <location>
        <begin position="1"/>
        <end position="564"/>
    </location>
</feature>
<feature type="binding site" evidence="1">
    <location>
        <begin position="65"/>
        <end position="72"/>
    </location>
    <ligand>
        <name>ATP</name>
        <dbReference type="ChEBI" id="CHEBI:30616"/>
    </ligand>
</feature>
<reference key="1">
    <citation type="submission" date="2007-04" db="EMBL/GenBank/DDBJ databases">
        <title>Complete sequence of Roseiflexus sp. RS-1.</title>
        <authorList>
            <consortium name="US DOE Joint Genome Institute"/>
            <person name="Copeland A."/>
            <person name="Lucas S."/>
            <person name="Lapidus A."/>
            <person name="Barry K."/>
            <person name="Detter J.C."/>
            <person name="Glavina del Rio T."/>
            <person name="Hammon N."/>
            <person name="Israni S."/>
            <person name="Dalin E."/>
            <person name="Tice H."/>
            <person name="Pitluck S."/>
            <person name="Chertkov O."/>
            <person name="Brettin T."/>
            <person name="Bruce D."/>
            <person name="Han C."/>
            <person name="Schmutz J."/>
            <person name="Larimer F."/>
            <person name="Land M."/>
            <person name="Hauser L."/>
            <person name="Kyrpides N."/>
            <person name="Mikhailova N."/>
            <person name="Bryant D.A."/>
            <person name="Richardson P."/>
        </authorList>
    </citation>
    <scope>NUCLEOTIDE SEQUENCE [LARGE SCALE GENOMIC DNA]</scope>
    <source>
        <strain>RS-1</strain>
    </source>
</reference>